<dbReference type="EMBL" id="KP268613">
    <property type="protein sequence ID" value="AJD85828.1"/>
    <property type="molecule type" value="mRNA"/>
</dbReference>
<dbReference type="SMR" id="A0A0B5ADT9"/>
<dbReference type="GO" id="GO:0005576">
    <property type="term" value="C:extracellular region"/>
    <property type="evidence" value="ECO:0007669"/>
    <property type="project" value="UniProtKB-SubCell"/>
</dbReference>
<dbReference type="GO" id="GO:0005179">
    <property type="term" value="F:hormone activity"/>
    <property type="evidence" value="ECO:0007669"/>
    <property type="project" value="UniProtKB-KW"/>
</dbReference>
<dbReference type="GO" id="GO:0090729">
    <property type="term" value="F:toxin activity"/>
    <property type="evidence" value="ECO:0007669"/>
    <property type="project" value="UniProtKB-KW"/>
</dbReference>
<dbReference type="GO" id="GO:0006006">
    <property type="term" value="P:glucose metabolic process"/>
    <property type="evidence" value="ECO:0007669"/>
    <property type="project" value="UniProtKB-KW"/>
</dbReference>
<dbReference type="Gene3D" id="1.10.100.10">
    <property type="entry name" value="Insulin-like"/>
    <property type="match status" value="1"/>
</dbReference>
<dbReference type="InterPro" id="IPR016179">
    <property type="entry name" value="Insulin-like"/>
</dbReference>
<dbReference type="InterPro" id="IPR036438">
    <property type="entry name" value="Insulin-like_sf"/>
</dbReference>
<dbReference type="InterPro" id="IPR016724">
    <property type="entry name" value="Insulin-rel_pep"/>
</dbReference>
<dbReference type="InterPro" id="IPR022353">
    <property type="entry name" value="Insulin_CS"/>
</dbReference>
<dbReference type="InterPro" id="IPR022352">
    <property type="entry name" value="Insulin_family"/>
</dbReference>
<dbReference type="PANTHER" id="PTHR13647:SF4">
    <property type="entry name" value="INSULIN-LIKE PEPTIDE 1-RELATED"/>
    <property type="match status" value="1"/>
</dbReference>
<dbReference type="PANTHER" id="PTHR13647">
    <property type="entry name" value="INSULIN-LIKE PEPTIDE 2-RELATED"/>
    <property type="match status" value="1"/>
</dbReference>
<dbReference type="Pfam" id="PF00049">
    <property type="entry name" value="Insulin"/>
    <property type="match status" value="1"/>
</dbReference>
<dbReference type="PIRSF" id="PIRSF018431">
    <property type="entry name" value="Molluscan_insulin_rel_peptide"/>
    <property type="match status" value="1"/>
</dbReference>
<dbReference type="PRINTS" id="PR00276">
    <property type="entry name" value="INSULINFAMLY"/>
</dbReference>
<dbReference type="SMART" id="SM00078">
    <property type="entry name" value="IlGF"/>
    <property type="match status" value="1"/>
</dbReference>
<dbReference type="SUPFAM" id="SSF56994">
    <property type="entry name" value="Insulin-like"/>
    <property type="match status" value="1"/>
</dbReference>
<dbReference type="PROSITE" id="PS00262">
    <property type="entry name" value="INSULIN"/>
    <property type="match status" value="1"/>
</dbReference>
<sequence>MTTSSYFLLVALGLLLYVCRSSFGSEHTCESDASPHPQGVCGSPLAEAVEAACELEESLQGGTGKKRGRASLLRKRRAFLSMLKARAKRNEASPLQRSGRGIVCECCKNHCNIEELTEYCPPVTEGSG</sequence>
<protein>
    <recommendedName>
        <fullName evidence="4">Con-Ins F2</fullName>
    </recommendedName>
    <alternativeName>
        <fullName evidence="7">Insulin 2</fullName>
    </alternativeName>
    <component>
        <recommendedName>
            <fullName evidence="4">Con-Ins F2 B chain</fullName>
        </recommendedName>
    </component>
    <component>
        <recommendedName>
            <fullName evidence="4">Con-Ins F2 A chain</fullName>
        </recommendedName>
    </component>
</protein>
<evidence type="ECO:0000250" key="1">
    <source>
        <dbReference type="UniProtKB" id="A0A0B5ABD9"/>
    </source>
</evidence>
<evidence type="ECO:0000250" key="2">
    <source>
        <dbReference type="UniProtKB" id="A0A0B5AC95"/>
    </source>
</evidence>
<evidence type="ECO:0000255" key="3"/>
<evidence type="ECO:0000303" key="4">
    <source>
    </source>
</evidence>
<evidence type="ECO:0000305" key="5"/>
<evidence type="ECO:0000305" key="6">
    <source>
    </source>
</evidence>
<evidence type="ECO:0000312" key="7">
    <source>
        <dbReference type="EMBL" id="AJD85828.1"/>
    </source>
</evidence>
<reference key="1">
    <citation type="journal article" date="2015" name="Proc. Natl. Acad. Sci. U.S.A.">
        <title>Specialized insulin is used for chemical warfare by fish-hunting cone snails.</title>
        <authorList>
            <person name="Safavi-Hemami H."/>
            <person name="Gajewiak J."/>
            <person name="Karanth S."/>
            <person name="Robinson S.D."/>
            <person name="Ueberheide B."/>
            <person name="Douglass A.D."/>
            <person name="Schlegel A."/>
            <person name="Imperial J.S."/>
            <person name="Watkins M."/>
            <person name="Bandyopadhyay P.K."/>
            <person name="Yandell M."/>
            <person name="Li Q."/>
            <person name="Purcell A.W."/>
            <person name="Norton R.S."/>
            <person name="Ellgaard L."/>
            <person name="Olivera B.M."/>
        </authorList>
    </citation>
    <scope>NUCLEOTIDE SEQUENCE [MRNA]</scope>
    <scope>AMIDATION AT SER-127</scope>
    <source>
        <tissue>Venom gland</tissue>
    </source>
</reference>
<comment type="function">
    <text evidence="2">This venom insulin facilitates prey capture by rapidly inducing hypoglycemic shock. Intraperitoneal injection of this peptide into zebrafish lowers blood glucose with the same potency than human insulin. In vivo, when applied to water, this peptide reduces overall locomotor activity of zebrafish larvae, observed as a significant decrease in the percentage of time spent swimming and movement frequency.</text>
</comment>
<comment type="subunit">
    <text evidence="2">Heterodimer of A and B chains; disulfide-linked.</text>
</comment>
<comment type="subcellular location">
    <subcellularLocation>
        <location evidence="2">Secreted</location>
    </subcellularLocation>
</comment>
<comment type="tissue specificity">
    <text evidence="6">Expressed by the venom gland.</text>
</comment>
<comment type="similarity">
    <text>Belongs to the insulin family.</text>
</comment>
<keyword id="KW-0027">Amidation</keyword>
<keyword id="KW-0119">Carbohydrate metabolism</keyword>
<keyword id="KW-0165">Cleavage on pair of basic residues</keyword>
<keyword id="KW-1015">Disulfide bond</keyword>
<keyword id="KW-0301">Gamma-carboxyglutamic acid</keyword>
<keyword id="KW-0313">Glucose metabolism</keyword>
<keyword id="KW-0372">Hormone</keyword>
<keyword id="KW-0964">Secreted</keyword>
<keyword id="KW-0732">Signal</keyword>
<keyword id="KW-0800">Toxin</keyword>
<feature type="signal peptide" evidence="3">
    <location>
        <begin position="1"/>
        <end position="24"/>
    </location>
</feature>
<feature type="peptide" id="PRO_5002112082" description="Con-Ins F2 B chain" evidence="1">
    <location>
        <begin position="25"/>
        <end position="58"/>
    </location>
</feature>
<feature type="propeptide" id="PRO_0000439334" description="C peptide" evidence="1">
    <location>
        <begin position="59"/>
        <end position="89"/>
    </location>
</feature>
<feature type="peptide" id="PRO_0000439335" description="Con-Ins F2 A chain" evidence="1">
    <location>
        <begin position="90"/>
        <end position="127"/>
    </location>
</feature>
<feature type="modified residue" description="4-carboxyglutamate; partial" evidence="2">
    <location>
        <position position="115"/>
    </location>
</feature>
<feature type="modified residue" description="Serine amide" evidence="6">
    <location>
        <position position="127"/>
    </location>
</feature>
<feature type="disulfide bond" evidence="5">
    <location>
        <begin position="29"/>
        <end position="104"/>
    </location>
</feature>
<feature type="disulfide bond" description="Interchain (between B and A chains)" evidence="2">
    <location>
        <begin position="41"/>
        <end position="107"/>
    </location>
</feature>
<feature type="disulfide bond" description="Interchain (between B and A chains)" evidence="2">
    <location>
        <begin position="53"/>
        <end position="120"/>
    </location>
</feature>
<feature type="disulfide bond" evidence="2">
    <location>
        <begin position="106"/>
        <end position="111"/>
    </location>
</feature>
<accession>A0A0B5ADT9</accession>
<organism>
    <name type="scientific">Conus floridulus</name>
    <name type="common">Cone snail</name>
    <name type="synonym">Lividoconus floridulus</name>
    <dbReference type="NCBI Taxonomy" id="97180"/>
    <lineage>
        <taxon>Eukaryota</taxon>
        <taxon>Metazoa</taxon>
        <taxon>Spiralia</taxon>
        <taxon>Lophotrochozoa</taxon>
        <taxon>Mollusca</taxon>
        <taxon>Gastropoda</taxon>
        <taxon>Caenogastropoda</taxon>
        <taxon>Neogastropoda</taxon>
        <taxon>Conoidea</taxon>
        <taxon>Conidae</taxon>
        <taxon>Conus</taxon>
        <taxon>Lividoconus</taxon>
    </lineage>
</organism>
<name>INS2A_CONFO</name>
<proteinExistence type="evidence at protein level"/>